<accession>P40091</accession>
<accession>D3DM56</accession>
<accession>Q70DC9</accession>
<accession>Q70DD1</accession>
<accession>Q70DD2</accession>
<accession>Q70DD3</accession>
<accession>Q70DD4</accession>
<accession>Q70DD6</accession>
<accession>Q70DD7</accession>
<accession>Q70DD8</accession>
<proteinExistence type="evidence at protein level"/>
<name>PEA2_YEAST</name>
<gene>
    <name type="primary">PEA2</name>
    <name type="synonym">PPF2</name>
    <name type="ordered locus">YER149C</name>
</gene>
<organism>
    <name type="scientific">Saccharomyces cerevisiae (strain ATCC 204508 / S288c)</name>
    <name type="common">Baker's yeast</name>
    <dbReference type="NCBI Taxonomy" id="559292"/>
    <lineage>
        <taxon>Eukaryota</taxon>
        <taxon>Fungi</taxon>
        <taxon>Dikarya</taxon>
        <taxon>Ascomycota</taxon>
        <taxon>Saccharomycotina</taxon>
        <taxon>Saccharomycetes</taxon>
        <taxon>Saccharomycetales</taxon>
        <taxon>Saccharomycetaceae</taxon>
        <taxon>Saccharomyces</taxon>
    </lineage>
</organism>
<reference key="1">
    <citation type="journal article" date="1996" name="J. Cell Biol.">
        <title>Pea2 protein of yeast is localized to sites of polarized growth and is required for efficient mating and bipolar budding.</title>
        <authorList>
            <person name="Valtz N.L.M."/>
            <person name="Herskowitz I."/>
        </authorList>
    </citation>
    <scope>NUCLEOTIDE SEQUENCE [GENOMIC DNA]</scope>
</reference>
<reference key="2">
    <citation type="submission" date="1996-12" db="EMBL/GenBank/DDBJ databases">
        <title>A novel yeast gene necessary for pheromone-induced pointed projection formation.</title>
        <authorList>
            <person name="Yorihuzi T."/>
            <person name="Ohsumi Y."/>
        </authorList>
    </citation>
    <scope>NUCLEOTIDE SEQUENCE [GENOMIC DNA]</scope>
    <source>
        <strain>ATCC 26109 / X2180</strain>
    </source>
</reference>
<reference key="3">
    <citation type="journal article" date="2004" name="Nucleic Acids Res.">
        <title>Differential evolution of the Saccharomyces cerevisiae DUP240 paralogs and implication of recombination in phylogeny.</title>
        <authorList>
            <person name="Leh-Louis V."/>
            <person name="Wirth B."/>
            <person name="Despons L."/>
            <person name="Wain-Hobson S."/>
            <person name="Potier S."/>
            <person name="Souciet J.-L."/>
        </authorList>
    </citation>
    <scope>NUCLEOTIDE SEQUENCE [GENOMIC DNA]</scope>
    <scope>VARIANTS ARG-90; THR-117; THR-157; SER-161; ILE-165; ASN-171; LEU-189; MET-210; LYS-249; ARG-253; ASN-325; SER-355; LEU-384 AND MET-409</scope>
    <source>
        <strain>CLIB 219</strain>
        <strain>CLIB 382</strain>
        <strain>CLIB 388</strain>
        <strain>CLIB 410</strain>
        <strain>CLIB 413</strain>
        <strain>CLIB 556</strain>
        <strain>CLIB 630</strain>
        <strain>CLIB 95</strain>
        <strain>K1</strain>
        <strain>R12</strain>
        <strain>R13</strain>
        <strain>Sigma 1278B</strain>
        <strain>YIIc12</strain>
        <strain>YIIc17</strain>
    </source>
</reference>
<reference key="4">
    <citation type="journal article" date="1997" name="Nature">
        <title>The nucleotide sequence of Saccharomyces cerevisiae chromosome V.</title>
        <authorList>
            <person name="Dietrich F.S."/>
            <person name="Mulligan J.T."/>
            <person name="Hennessy K.M."/>
            <person name="Yelton M.A."/>
            <person name="Allen E."/>
            <person name="Araujo R."/>
            <person name="Aviles E."/>
            <person name="Berno A."/>
            <person name="Brennan T."/>
            <person name="Carpenter J."/>
            <person name="Chen E."/>
            <person name="Cherry J.M."/>
            <person name="Chung E."/>
            <person name="Duncan M."/>
            <person name="Guzman E."/>
            <person name="Hartzell G."/>
            <person name="Hunicke-Smith S."/>
            <person name="Hyman R.W."/>
            <person name="Kayser A."/>
            <person name="Komp C."/>
            <person name="Lashkari D."/>
            <person name="Lew H."/>
            <person name="Lin D."/>
            <person name="Mosedale D."/>
            <person name="Nakahara K."/>
            <person name="Namath A."/>
            <person name="Norgren R."/>
            <person name="Oefner P."/>
            <person name="Oh C."/>
            <person name="Petel F.X."/>
            <person name="Roberts D."/>
            <person name="Sehl P."/>
            <person name="Schramm S."/>
            <person name="Shogren T."/>
            <person name="Smith V."/>
            <person name="Taylor P."/>
            <person name="Wei Y."/>
            <person name="Botstein D."/>
            <person name="Davis R.W."/>
        </authorList>
    </citation>
    <scope>NUCLEOTIDE SEQUENCE [LARGE SCALE GENOMIC DNA]</scope>
    <source>
        <strain>ATCC 204508 / S288c</strain>
    </source>
</reference>
<reference key="5">
    <citation type="journal article" date="2014" name="G3 (Bethesda)">
        <title>The reference genome sequence of Saccharomyces cerevisiae: Then and now.</title>
        <authorList>
            <person name="Engel S.R."/>
            <person name="Dietrich F.S."/>
            <person name="Fisk D.G."/>
            <person name="Binkley G."/>
            <person name="Balakrishnan R."/>
            <person name="Costanzo M.C."/>
            <person name="Dwight S.S."/>
            <person name="Hitz B.C."/>
            <person name="Karra K."/>
            <person name="Nash R.S."/>
            <person name="Weng S."/>
            <person name="Wong E.D."/>
            <person name="Lloyd P."/>
            <person name="Skrzypek M.S."/>
            <person name="Miyasato S.R."/>
            <person name="Simison M."/>
            <person name="Cherry J.M."/>
        </authorList>
    </citation>
    <scope>GENOME REANNOTATION</scope>
    <source>
        <strain>ATCC 204508 / S288c</strain>
    </source>
</reference>
<reference key="6">
    <citation type="journal article" date="2003" name="Nature">
        <title>Global analysis of protein expression in yeast.</title>
        <authorList>
            <person name="Ghaemmaghami S."/>
            <person name="Huh W.-K."/>
            <person name="Bower K."/>
            <person name="Howson R.W."/>
            <person name="Belle A."/>
            <person name="Dephoure N."/>
            <person name="O'Shea E.K."/>
            <person name="Weissman J.S."/>
        </authorList>
    </citation>
    <scope>LEVEL OF PROTEIN EXPRESSION [LARGE SCALE ANALYSIS]</scope>
</reference>
<reference key="7">
    <citation type="journal article" date="2007" name="J. Proteome Res.">
        <title>Large-scale phosphorylation analysis of alpha-factor-arrested Saccharomyces cerevisiae.</title>
        <authorList>
            <person name="Li X."/>
            <person name="Gerber S.A."/>
            <person name="Rudner A.D."/>
            <person name="Beausoleil S.A."/>
            <person name="Haas W."/>
            <person name="Villen J."/>
            <person name="Elias J.E."/>
            <person name="Gygi S.P."/>
        </authorList>
    </citation>
    <scope>PHOSPHORYLATION [LARGE SCALE ANALYSIS] AT SER-230</scope>
    <scope>IDENTIFICATION BY MASS SPECTROMETRY [LARGE SCALE ANALYSIS]</scope>
    <source>
        <strain>ADR376</strain>
    </source>
</reference>
<reference key="8">
    <citation type="journal article" date="2008" name="Mol. Cell. Proteomics">
        <title>A multidimensional chromatography technology for in-depth phosphoproteome analysis.</title>
        <authorList>
            <person name="Albuquerque C.P."/>
            <person name="Smolka M.B."/>
            <person name="Payne S.H."/>
            <person name="Bafna V."/>
            <person name="Eng J."/>
            <person name="Zhou H."/>
        </authorList>
    </citation>
    <scope>PHOSPHORYLATION [LARGE SCALE ANALYSIS] AT SER-230</scope>
    <scope>IDENTIFICATION BY MASS SPECTROMETRY [LARGE SCALE ANALYSIS]</scope>
</reference>
<reference key="9">
    <citation type="journal article" date="2009" name="Science">
        <title>Global analysis of Cdk1 substrate phosphorylation sites provides insights into evolution.</title>
        <authorList>
            <person name="Holt L.J."/>
            <person name="Tuch B.B."/>
            <person name="Villen J."/>
            <person name="Johnson A.D."/>
            <person name="Gygi S.P."/>
            <person name="Morgan D.O."/>
        </authorList>
    </citation>
    <scope>PHOSPHORYLATION [LARGE SCALE ANALYSIS] AT SER-230</scope>
    <scope>IDENTIFICATION BY MASS SPECTROMETRY [LARGE SCALE ANALYSIS]</scope>
</reference>
<protein>
    <recommendedName>
        <fullName>Protein PEA2</fullName>
    </recommendedName>
    <alternativeName>
        <fullName>Protein PPF2</fullName>
    </alternativeName>
</protein>
<keyword id="KW-0597">Phosphoprotein</keyword>
<keyword id="KW-1185">Reference proteome</keyword>
<sequence>MHKFDLELSRRANPLLFSAERYEEYPLKYDELKQYLLSQNPSHPHHNSRPYTSIDYFDYLLYRSKNDESEIDLDKKLVSEFALYYVQKEHLNSDDLNPTLNELLKLQPKSADWYEMMLRILESINTTGIDQLTKENNNSFPNSKRARSSTNMGGTDKFNKGAYHTDKADDDKNEILQELTSFLMSNSIQKGIDIKPIPLDDPVKFLKNGINSILDTCVSLEKNTSSPPISPNAAAIQEEDSSKKLEELETAFSDLQLAHNFLTKQFENDRAEYVQDIEKLTRTNRELQDKLLNNHSNLSKTEKKLHELEQENKELEKANNKLNSSRHNFGMSSPASSPVTWDPSSPSSVGSPTSGSGSRSLSIMTSEFKKVLTSTQRKYEKELSDEREHRFKLERELALLKNAEANTSLALNRDDPPDML</sequence>
<feature type="chain" id="PRO_0000058300" description="Protein PEA2">
    <location>
        <begin position="1"/>
        <end position="420"/>
    </location>
</feature>
<feature type="region of interest" description="Disordered" evidence="1">
    <location>
        <begin position="132"/>
        <end position="169"/>
    </location>
</feature>
<feature type="region of interest" description="Disordered" evidence="1">
    <location>
        <begin position="323"/>
        <end position="363"/>
    </location>
</feature>
<feature type="compositionally biased region" description="Polar residues" evidence="1">
    <location>
        <begin position="132"/>
        <end position="153"/>
    </location>
</feature>
<feature type="compositionally biased region" description="Basic and acidic residues" evidence="1">
    <location>
        <begin position="157"/>
        <end position="169"/>
    </location>
</feature>
<feature type="compositionally biased region" description="Polar residues" evidence="1">
    <location>
        <begin position="325"/>
        <end position="339"/>
    </location>
</feature>
<feature type="compositionally biased region" description="Low complexity" evidence="1">
    <location>
        <begin position="343"/>
        <end position="362"/>
    </location>
</feature>
<feature type="modified residue" description="Phosphoserine" evidence="4 5 6">
    <location>
        <position position="230"/>
    </location>
</feature>
<feature type="sequence variant" description="In strain: CLIB 219." evidence="3">
    <original>H</original>
    <variation>R</variation>
    <location>
        <position position="90"/>
    </location>
</feature>
<feature type="sequence variant" description="In strain: CLIB 630." evidence="3">
    <original>M</original>
    <variation>T</variation>
    <location>
        <position position="117"/>
    </location>
</feature>
<feature type="sequence variant" description="In strain: CLIB 219." evidence="3">
    <original>K</original>
    <variation>T</variation>
    <location>
        <position position="157"/>
    </location>
</feature>
<feature type="sequence variant" description="In strain: CLIB 630." evidence="3">
    <original>G</original>
    <variation>S</variation>
    <location>
        <position position="161"/>
    </location>
</feature>
<feature type="sequence variant" description="In strain: CLIB 630." evidence="3">
    <original>T</original>
    <variation>I</variation>
    <location>
        <position position="165"/>
    </location>
</feature>
<feature type="sequence variant" description="In strain: CLIB 630." evidence="3">
    <original>D</original>
    <variation>N</variation>
    <location>
        <position position="171"/>
    </location>
</feature>
<feature type="sequence variant" description="In strain: CLIB 382." evidence="3">
    <original>Q</original>
    <variation>L</variation>
    <location>
        <position position="189"/>
    </location>
</feature>
<feature type="sequence variant" description="In strain: CLIB 413 haplotype Ha2." evidence="3">
    <original>I</original>
    <variation>M</variation>
    <location>
        <position position="210"/>
    </location>
</feature>
<feature type="sequence variant" description="In strain: CLIB 556." evidence="3">
    <original>E</original>
    <variation>K</variation>
    <location>
        <position position="249"/>
    </location>
</feature>
<feature type="sequence variant" description="In strain: Sigma 1278B." evidence="3">
    <original>S</original>
    <variation>R</variation>
    <location>
        <position position="253"/>
    </location>
</feature>
<feature type="sequence variant" description="In strain: CLIB 219." evidence="3">
    <original>S</original>
    <variation>N</variation>
    <location>
        <position position="325"/>
    </location>
</feature>
<feature type="sequence variant" description="In strain: R12." evidence="3">
    <original>G</original>
    <variation>S</variation>
    <location>
        <position position="355"/>
    </location>
</feature>
<feature type="sequence variant" description="In strain: CLIB 219." evidence="3">
    <original>S</original>
    <variation>L</variation>
    <location>
        <position position="384"/>
    </location>
</feature>
<feature type="sequence variant" description="In strain: CLIB 410, CLIB 413 and Sigma 1278B." evidence="3">
    <original>L</original>
    <variation>M</variation>
    <location>
        <position position="409"/>
    </location>
</feature>
<comment type="function">
    <text>Localized to sites of polarized growth and is required for efficient mating and bipolar budding.</text>
</comment>
<comment type="interaction">
    <interactant intactId="EBI-13106">
        <id>P40091</id>
    </interactant>
    <interactant intactId="EBI-7179">
        <id>P11710</id>
        <label>FUS1</label>
    </interactant>
    <organismsDiffer>false</organismsDiffer>
    <experiments>5</experiments>
</comment>
<comment type="interaction">
    <interactant intactId="EBI-13106">
        <id>P40091</id>
    </interactant>
    <interactant intactId="EBI-27256">
        <id>P39523</id>
        <label>YMR124W</label>
    </interactant>
    <organismsDiffer>false</organismsDiffer>
    <experiments>6</experiments>
</comment>
<comment type="miscellaneous">
    <text evidence="2">Present with 7820 molecules/cell in log phase SD medium.</text>
</comment>
<evidence type="ECO:0000256" key="1">
    <source>
        <dbReference type="SAM" id="MobiDB-lite"/>
    </source>
</evidence>
<evidence type="ECO:0000269" key="2">
    <source>
    </source>
</evidence>
<evidence type="ECO:0000269" key="3">
    <source>
    </source>
</evidence>
<evidence type="ECO:0007744" key="4">
    <source>
    </source>
</evidence>
<evidence type="ECO:0007744" key="5">
    <source>
    </source>
</evidence>
<evidence type="ECO:0007744" key="6">
    <source>
    </source>
</evidence>
<dbReference type="EMBL" id="Y07594">
    <property type="protein sequence ID" value="CAA68869.1"/>
    <property type="molecule type" value="Genomic_DNA"/>
</dbReference>
<dbReference type="EMBL" id="D38413">
    <property type="protein sequence ID" value="BAA07465.1"/>
    <property type="molecule type" value="Genomic_DNA"/>
</dbReference>
<dbReference type="EMBL" id="AJ585620">
    <property type="protein sequence ID" value="CAE52140.1"/>
    <property type="molecule type" value="Genomic_DNA"/>
</dbReference>
<dbReference type="EMBL" id="AJ585621">
    <property type="protein sequence ID" value="CAE52141.1"/>
    <property type="molecule type" value="Genomic_DNA"/>
</dbReference>
<dbReference type="EMBL" id="AJ585622">
    <property type="protein sequence ID" value="CAE52142.1"/>
    <property type="molecule type" value="Genomic_DNA"/>
</dbReference>
<dbReference type="EMBL" id="AJ585623">
    <property type="protein sequence ID" value="CAE52143.1"/>
    <property type="molecule type" value="Genomic_DNA"/>
</dbReference>
<dbReference type="EMBL" id="AJ585624">
    <property type="protein sequence ID" value="CAE52144.1"/>
    <property type="molecule type" value="Genomic_DNA"/>
</dbReference>
<dbReference type="EMBL" id="AJ585625">
    <property type="protein sequence ID" value="CAE52145.1"/>
    <property type="molecule type" value="Genomic_DNA"/>
</dbReference>
<dbReference type="EMBL" id="AJ585626">
    <property type="protein sequence ID" value="CAE52146.1"/>
    <property type="molecule type" value="Genomic_DNA"/>
</dbReference>
<dbReference type="EMBL" id="AJ585627">
    <property type="protein sequence ID" value="CAE52147.1"/>
    <property type="molecule type" value="Genomic_DNA"/>
</dbReference>
<dbReference type="EMBL" id="AJ585628">
    <property type="protein sequence ID" value="CAE52148.1"/>
    <property type="molecule type" value="Genomic_DNA"/>
</dbReference>
<dbReference type="EMBL" id="AJ585629">
    <property type="protein sequence ID" value="CAE52149.1"/>
    <property type="molecule type" value="Genomic_DNA"/>
</dbReference>
<dbReference type="EMBL" id="AJ585630">
    <property type="protein sequence ID" value="CAE52150.1"/>
    <property type="molecule type" value="Genomic_DNA"/>
</dbReference>
<dbReference type="EMBL" id="AJ585631">
    <property type="protein sequence ID" value="CAE52151.1"/>
    <property type="molecule type" value="Genomic_DNA"/>
</dbReference>
<dbReference type="EMBL" id="AJ585632">
    <property type="protein sequence ID" value="CAE52152.1"/>
    <property type="molecule type" value="Genomic_DNA"/>
</dbReference>
<dbReference type="EMBL" id="AJ585633">
    <property type="protein sequence ID" value="CAE52153.1"/>
    <property type="molecule type" value="Genomic_DNA"/>
</dbReference>
<dbReference type="EMBL" id="AJ585634">
    <property type="protein sequence ID" value="CAE52154.1"/>
    <property type="molecule type" value="Genomic_DNA"/>
</dbReference>
<dbReference type="EMBL" id="AJ585635">
    <property type="protein sequence ID" value="CAE52155.1"/>
    <property type="molecule type" value="Genomic_DNA"/>
</dbReference>
<dbReference type="EMBL" id="AJ585636">
    <property type="protein sequence ID" value="CAE52156.1"/>
    <property type="molecule type" value="Genomic_DNA"/>
</dbReference>
<dbReference type="EMBL" id="U18917">
    <property type="protein sequence ID" value="AAB64676.1"/>
    <property type="molecule type" value="Genomic_DNA"/>
</dbReference>
<dbReference type="EMBL" id="BK006939">
    <property type="protein sequence ID" value="DAA07810.1"/>
    <property type="molecule type" value="Genomic_DNA"/>
</dbReference>
<dbReference type="PIR" id="S50652">
    <property type="entry name" value="S50652"/>
</dbReference>
<dbReference type="RefSeq" id="NP_011076.1">
    <property type="nucleotide sequence ID" value="NM_001179039.1"/>
</dbReference>
<dbReference type="SMR" id="P40091"/>
<dbReference type="BioGRID" id="36898">
    <property type="interactions" value="157"/>
</dbReference>
<dbReference type="ComplexPortal" id="CPX-3188">
    <property type="entry name" value="Polarisome"/>
</dbReference>
<dbReference type="DIP" id="DIP-2463N"/>
<dbReference type="FunCoup" id="P40091">
    <property type="interactions" value="60"/>
</dbReference>
<dbReference type="IntAct" id="P40091">
    <property type="interactions" value="10"/>
</dbReference>
<dbReference type="MINT" id="P40091"/>
<dbReference type="STRING" id="4932.YER149C"/>
<dbReference type="GlyGen" id="P40091">
    <property type="glycosylation" value="2 sites, 1 O-linked glycan (2 sites)"/>
</dbReference>
<dbReference type="iPTMnet" id="P40091"/>
<dbReference type="PaxDb" id="4932-YER149C"/>
<dbReference type="PeptideAtlas" id="P40091"/>
<dbReference type="EnsemblFungi" id="YER149C_mRNA">
    <property type="protein sequence ID" value="YER149C"/>
    <property type="gene ID" value="YER149C"/>
</dbReference>
<dbReference type="GeneID" id="856892"/>
<dbReference type="KEGG" id="sce:YER149C"/>
<dbReference type="AGR" id="SGD:S000000951"/>
<dbReference type="SGD" id="S000000951">
    <property type="gene designation" value="PEA2"/>
</dbReference>
<dbReference type="VEuPathDB" id="FungiDB:YER149C"/>
<dbReference type="eggNOG" id="ENOG502QTTD">
    <property type="taxonomic scope" value="Eukaryota"/>
</dbReference>
<dbReference type="HOGENOM" id="CLU_054089_0_0_1"/>
<dbReference type="InParanoid" id="P40091"/>
<dbReference type="OMA" id="IMRNEFK"/>
<dbReference type="OrthoDB" id="3996692at2759"/>
<dbReference type="BioCyc" id="YEAST:G3O-30310-MONOMER"/>
<dbReference type="BioGRID-ORCS" id="856892">
    <property type="hits" value="4 hits in 10 CRISPR screens"/>
</dbReference>
<dbReference type="PRO" id="PR:P40091"/>
<dbReference type="Proteomes" id="UP000002311">
    <property type="component" value="Chromosome V"/>
</dbReference>
<dbReference type="RNAct" id="P40091">
    <property type="molecule type" value="protein"/>
</dbReference>
<dbReference type="GO" id="GO:0005933">
    <property type="term" value="C:cellular bud"/>
    <property type="evidence" value="ECO:0000314"/>
    <property type="project" value="SGD"/>
</dbReference>
<dbReference type="GO" id="GO:0005935">
    <property type="term" value="C:cellular bud neck"/>
    <property type="evidence" value="ECO:0000314"/>
    <property type="project" value="SGD"/>
</dbReference>
<dbReference type="GO" id="GO:0005934">
    <property type="term" value="C:cellular bud tip"/>
    <property type="evidence" value="ECO:0000314"/>
    <property type="project" value="SGD"/>
</dbReference>
<dbReference type="GO" id="GO:0000131">
    <property type="term" value="C:incipient cellular bud site"/>
    <property type="evidence" value="ECO:0000314"/>
    <property type="project" value="SGD"/>
</dbReference>
<dbReference type="GO" id="GO:0043332">
    <property type="term" value="C:mating projection tip"/>
    <property type="evidence" value="ECO:0000314"/>
    <property type="project" value="SGD"/>
</dbReference>
<dbReference type="GO" id="GO:0000133">
    <property type="term" value="C:polarisome"/>
    <property type="evidence" value="ECO:0000314"/>
    <property type="project" value="SGD"/>
</dbReference>
<dbReference type="GO" id="GO:0030427">
    <property type="term" value="C:site of polarized growth"/>
    <property type="evidence" value="ECO:0000314"/>
    <property type="project" value="SGD"/>
</dbReference>
<dbReference type="GO" id="GO:0031489">
    <property type="term" value="F:myosin V binding"/>
    <property type="evidence" value="ECO:0000314"/>
    <property type="project" value="SGD"/>
</dbReference>
<dbReference type="GO" id="GO:0007121">
    <property type="term" value="P:bipolar cellular bud site selection"/>
    <property type="evidence" value="ECO:0000315"/>
    <property type="project" value="SGD"/>
</dbReference>
<dbReference type="GO" id="GO:0007118">
    <property type="term" value="P:budding cell apical bud growth"/>
    <property type="evidence" value="ECO:0000315"/>
    <property type="project" value="SGD"/>
</dbReference>
<dbReference type="GO" id="GO:0000753">
    <property type="term" value="P:cell morphogenesis involved in conjugation with cellular fusion"/>
    <property type="evidence" value="ECO:0000315"/>
    <property type="project" value="SGD"/>
</dbReference>
<dbReference type="GO" id="GO:0071474">
    <property type="term" value="P:cellular hyperosmotic response"/>
    <property type="evidence" value="ECO:0000315"/>
    <property type="project" value="SGD"/>
</dbReference>
<dbReference type="GO" id="GO:0071468">
    <property type="term" value="P:cellular response to acidic pH"/>
    <property type="evidence" value="ECO:0000315"/>
    <property type="project" value="SGD"/>
</dbReference>
<dbReference type="GO" id="GO:0030010">
    <property type="term" value="P:establishment of cell polarity"/>
    <property type="evidence" value="ECO:0000315"/>
    <property type="project" value="SGD"/>
</dbReference>
<dbReference type="GO" id="GO:0030950">
    <property type="term" value="P:establishment or maintenance of actin cytoskeleton polarity"/>
    <property type="evidence" value="ECO:0000303"/>
    <property type="project" value="ComplexPortal"/>
</dbReference>
<dbReference type="GO" id="GO:0030447">
    <property type="term" value="P:filamentous growth"/>
    <property type="evidence" value="ECO:0000315"/>
    <property type="project" value="SGD"/>
</dbReference>
<dbReference type="GO" id="GO:0007124">
    <property type="term" value="P:pseudohyphal growth"/>
    <property type="evidence" value="ECO:0000315"/>
    <property type="project" value="SGD"/>
</dbReference>
<dbReference type="GO" id="GO:0032956">
    <property type="term" value="P:regulation of actin cytoskeleton organization"/>
    <property type="evidence" value="ECO:0000315"/>
    <property type="project" value="SGD"/>
</dbReference>
<dbReference type="GO" id="GO:0032880">
    <property type="term" value="P:regulation of protein localization"/>
    <property type="evidence" value="ECO:0000315"/>
    <property type="project" value="SGD"/>
</dbReference>
<dbReference type="GO" id="GO:0006903">
    <property type="term" value="P:vesicle targeting"/>
    <property type="evidence" value="ECO:0000303"/>
    <property type="project" value="ComplexPortal"/>
</dbReference>